<keyword id="KW-0150">Chloroplast</keyword>
<keyword id="KW-0472">Membrane</keyword>
<keyword id="KW-0597">Phosphoprotein</keyword>
<keyword id="KW-0602">Photosynthesis</keyword>
<keyword id="KW-0604">Photosystem II</keyword>
<keyword id="KW-0934">Plastid</keyword>
<keyword id="KW-0793">Thylakoid</keyword>
<keyword id="KW-0812">Transmembrane</keyword>
<keyword id="KW-1133">Transmembrane helix</keyword>
<geneLocation type="chloroplast"/>
<protein>
    <recommendedName>
        <fullName evidence="2">Photosystem II reaction center protein H</fullName>
        <shortName evidence="2">PSII-H</shortName>
    </recommendedName>
    <alternativeName>
        <fullName evidence="2">Photosystem II 10 kDa phosphoprotein</fullName>
    </alternativeName>
</protein>
<feature type="initiator methionine" description="Removed" evidence="1">
    <location>
        <position position="1"/>
    </location>
</feature>
<feature type="chain" id="PRO_0000070511" description="Photosystem II reaction center protein H">
    <location>
        <begin position="2"/>
        <end position="73"/>
    </location>
</feature>
<feature type="transmembrane region" description="Helical" evidence="2">
    <location>
        <begin position="41"/>
        <end position="61"/>
    </location>
</feature>
<feature type="region of interest" description="Disordered" evidence="3">
    <location>
        <begin position="1"/>
        <end position="23"/>
    </location>
</feature>
<feature type="modified residue" description="Phosphothreonine" evidence="2">
    <location>
        <position position="3"/>
    </location>
</feature>
<feature type="modified residue" description="Phosphothreonine" evidence="2">
    <location>
        <position position="5"/>
    </location>
</feature>
<accession>P12363</accession>
<accession>A1E9L9</accession>
<gene>
    <name evidence="2" type="primary">psbH</name>
</gene>
<organism>
    <name type="scientific">Hordeum vulgare</name>
    <name type="common">Barley</name>
    <dbReference type="NCBI Taxonomy" id="4513"/>
    <lineage>
        <taxon>Eukaryota</taxon>
        <taxon>Viridiplantae</taxon>
        <taxon>Streptophyta</taxon>
        <taxon>Embryophyta</taxon>
        <taxon>Tracheophyta</taxon>
        <taxon>Spermatophyta</taxon>
        <taxon>Magnoliopsida</taxon>
        <taxon>Liliopsida</taxon>
        <taxon>Poales</taxon>
        <taxon>Poaceae</taxon>
        <taxon>BOP clade</taxon>
        <taxon>Pooideae</taxon>
        <taxon>Triticodae</taxon>
        <taxon>Triticeae</taxon>
        <taxon>Hordeinae</taxon>
        <taxon>Hordeum</taxon>
    </lineage>
</organism>
<name>PSBH_HORVU</name>
<evidence type="ECO:0000250" key="1">
    <source>
        <dbReference type="UniProtKB" id="P56780"/>
    </source>
</evidence>
<evidence type="ECO:0000255" key="2">
    <source>
        <dbReference type="HAMAP-Rule" id="MF_00752"/>
    </source>
</evidence>
<evidence type="ECO:0000256" key="3">
    <source>
        <dbReference type="SAM" id="MobiDB-lite"/>
    </source>
</evidence>
<evidence type="ECO:0000269" key="4">
    <source>
    </source>
</evidence>
<evidence type="ECO:0000305" key="5">
    <source>
    </source>
</evidence>
<sequence>MATQTVEDSSKPRPKRTGAGSLLKPLNSEYGKVAPGWGTTPFMGVAMALFAIFLSIILEIYNSSILLDGILTN</sequence>
<proteinExistence type="evidence at protein level"/>
<comment type="function">
    <text evidence="2">One of the components of the core complex of photosystem II (PSII), required for its stability and/or assembly. PSII is a light-driven water:plastoquinone oxidoreductase that uses light energy to abstract electrons from H(2)O, generating O(2) and a proton gradient subsequently used for ATP formation. It consists of a core antenna complex that captures photons, and an electron transfer chain that converts photonic excitation into a charge separation.</text>
</comment>
<comment type="subunit">
    <text evidence="2 4">PSII is composed of 1 copy each of membrane proteins PsbA, PsbB, PsbC, PsbD, PsbE, PsbF, PsbH, PsbI, PsbJ, PsbK, PsbL, PsbM, PsbT, PsbX, PsbY, PsbZ, Psb30/Ycf12, at least 3 peripheral proteins of the oxygen-evolving complex and a large number of cofactors. It forms dimeric complexes. Detected in both etioplasts and green leaves; PSII is only assembled in green leaves (PubMed:19137553).</text>
</comment>
<comment type="subcellular location">
    <subcellularLocation>
        <location evidence="2 5">Plastid</location>
        <location evidence="2 5">Chloroplast thylakoid membrane</location>
        <topology evidence="2 5">Single-pass membrane protein</topology>
    </subcellularLocation>
</comment>
<comment type="PTM">
    <text evidence="2">Phosphorylation is a light-dependent reaction catalyzed by a membrane-bound kinase; phosphorylation occurs on Thr residue(s) in the N-terminus of the protein.</text>
</comment>
<comment type="similarity">
    <text evidence="2">Belongs to the PsbH family.</text>
</comment>
<reference key="1">
    <citation type="journal article" date="1989" name="Nucleic Acids Res.">
        <title>Nucleotide sequence of the 5.2 kbp barley chloroplast DNA fragment, containing psbB-psbH-petB-petD gene cluster.</title>
        <authorList>
            <person name="Andreeva A.V."/>
            <person name="Buryakova A.A."/>
            <person name="Reverdatto S.V."/>
            <person name="Chakhmakhcheva O.G."/>
            <person name="Efimov V.A."/>
        </authorList>
    </citation>
    <scope>NUCLEOTIDE SEQUENCE [GENOMIC DNA]</scope>
    <source>
        <strain>cv. Sabarlis</strain>
    </source>
</reference>
<reference key="2">
    <citation type="journal article" date="1991" name="Bioorg. Khim.">
        <title>Photosystem II of rye. Nucleotide sequence of the psbB, psbC, psbE, psbF, psbH genes of rye and chloroplast DNA regions adjacent to them.</title>
        <authorList>
            <person name="Efimov V.A."/>
            <person name="Andreeva A.V."/>
            <person name="Reverdatto S.V."/>
            <person name="Chakhmakhcheva O.G."/>
        </authorList>
    </citation>
    <scope>NUCLEOTIDE SEQUENCE [GENOMIC DNA]</scope>
    <source>
        <strain>cv. Sabarlis</strain>
    </source>
</reference>
<reference key="3">
    <citation type="journal article" date="2007" name="Theor. Appl. Genet.">
        <title>Complete chloroplast genome sequences of Hordeum vulgare, Sorghum bicolor and Agrostis stolonifera, and comparative analyses with other grass genomes.</title>
        <authorList>
            <person name="Saski C."/>
            <person name="Lee S.-B."/>
            <person name="Fjellheim S."/>
            <person name="Guda C."/>
            <person name="Jansen R.K."/>
            <person name="Luo H."/>
            <person name="Tomkins J."/>
            <person name="Rognli O.A."/>
            <person name="Daniell H."/>
            <person name="Clarke J.L."/>
        </authorList>
    </citation>
    <scope>NUCLEOTIDE SEQUENCE [LARGE SCALE GENOMIC DNA]</scope>
    <source>
        <strain>cv. Morex</strain>
    </source>
</reference>
<reference key="4">
    <citation type="journal article" date="2009" name="Proteomics">
        <title>Mass spectrometric characterization of membrane integral low molecular weight proteins from photosystem II in barley etioplasts.</title>
        <authorList>
            <person name="Ploescher M."/>
            <person name="Granvogl B."/>
            <person name="Zoryan M."/>
            <person name="Reisinger V."/>
            <person name="Eichacker L.A."/>
        </authorList>
    </citation>
    <scope>IDENTIFICATION BY MASS SPECTROMETRY</scope>
    <scope>SUBUNIT</scope>
    <scope>SUBCELLULAR LOCATION</scope>
    <source>
        <strain>cv. Steffi</strain>
    </source>
</reference>
<dbReference type="EMBL" id="X14107">
    <property type="protein sequence ID" value="CAA32265.1"/>
    <property type="molecule type" value="Genomic_DNA"/>
</dbReference>
<dbReference type="EMBL" id="EF115541">
    <property type="protein sequence ID" value="ABK79440.1"/>
    <property type="molecule type" value="Genomic_DNA"/>
</dbReference>
<dbReference type="PIR" id="S04148">
    <property type="entry name" value="S04148"/>
</dbReference>
<dbReference type="RefSeq" id="YP_010144453.1">
    <property type="nucleotide sequence ID" value="NC_056985.1"/>
</dbReference>
<dbReference type="RefSeq" id="YP_874681.1">
    <property type="nucleotide sequence ID" value="NC_008590.1"/>
</dbReference>
<dbReference type="SMR" id="P12363"/>
<dbReference type="GeneID" id="4525078"/>
<dbReference type="GeneID" id="67140662"/>
<dbReference type="GO" id="GO:0009535">
    <property type="term" value="C:chloroplast thylakoid membrane"/>
    <property type="evidence" value="ECO:0007669"/>
    <property type="project" value="UniProtKB-SubCell"/>
</dbReference>
<dbReference type="GO" id="GO:0009523">
    <property type="term" value="C:photosystem II"/>
    <property type="evidence" value="ECO:0007669"/>
    <property type="project" value="UniProtKB-KW"/>
</dbReference>
<dbReference type="GO" id="GO:0042301">
    <property type="term" value="F:phosphate ion binding"/>
    <property type="evidence" value="ECO:0007669"/>
    <property type="project" value="InterPro"/>
</dbReference>
<dbReference type="GO" id="GO:0015979">
    <property type="term" value="P:photosynthesis"/>
    <property type="evidence" value="ECO:0007669"/>
    <property type="project" value="UniProtKB-UniRule"/>
</dbReference>
<dbReference type="GO" id="GO:0050821">
    <property type="term" value="P:protein stabilization"/>
    <property type="evidence" value="ECO:0007669"/>
    <property type="project" value="InterPro"/>
</dbReference>
<dbReference type="FunFam" id="1.20.5.880:FF:000001">
    <property type="entry name" value="Photosystem II reaction center protein H"/>
    <property type="match status" value="1"/>
</dbReference>
<dbReference type="Gene3D" id="1.20.5.880">
    <property type="entry name" value="Photosystem II reaction center protein H"/>
    <property type="match status" value="1"/>
</dbReference>
<dbReference type="HAMAP" id="MF_00752">
    <property type="entry name" value="PSII_PsbH"/>
    <property type="match status" value="1"/>
</dbReference>
<dbReference type="InterPro" id="IPR001056">
    <property type="entry name" value="PSII_PsbH"/>
</dbReference>
<dbReference type="InterPro" id="IPR036863">
    <property type="entry name" value="PSII_PsbH_sf"/>
</dbReference>
<dbReference type="NCBIfam" id="NF002728">
    <property type="entry name" value="PRK02624.1"/>
    <property type="match status" value="1"/>
</dbReference>
<dbReference type="PANTHER" id="PTHR34469">
    <property type="entry name" value="PHOTOSYSTEM II REACTION CENTER PROTEIN H"/>
    <property type="match status" value="1"/>
</dbReference>
<dbReference type="PANTHER" id="PTHR34469:SF4">
    <property type="entry name" value="PHOTOSYSTEM II REACTION CENTER PROTEIN H"/>
    <property type="match status" value="1"/>
</dbReference>
<dbReference type="Pfam" id="PF00737">
    <property type="entry name" value="PsbH"/>
    <property type="match status" value="1"/>
</dbReference>
<dbReference type="SUPFAM" id="SSF161025">
    <property type="entry name" value="Photosystem II 10 kDa phosphoprotein PsbH"/>
    <property type="match status" value="1"/>
</dbReference>